<sequence length="238" mass="27150">MQAVLLVVALFGAALADPPKQIHLPTPKVKRVEKLAHQEHAVNVVQAVPITKTVVRTVNVPKTLIQEVPIHVYTDLVLKSPVPRRKVIDIKKTVLQPHIRHVPVDQPYVVHRRVPVIHTKIVRQPRPVHRIVKIPKLKVVQKQLNRIIDVPQIVTKERIHRVIKPVPVERTRIQHVDVDVPMRVVVPEPVVQDRHTQSVETVPVPHDVVRKVKVPKTFVLKDLIPVPEKAGRHYSSDK</sequence>
<comment type="subcellular location">
    <subcellularLocation>
        <location evidence="2">Secreted</location>
    </subcellularLocation>
</comment>
<comment type="tissue specificity">
    <text evidence="2">Prismatic layer of shell (at protein level). Expressed primarily in the mantle with highest level in the mantle edge and lower level in the mantle pallium.</text>
</comment>
<keyword id="KW-0903">Direct protein sequencing</keyword>
<keyword id="KW-0964">Secreted</keyword>
<keyword id="KW-0732">Signal</keyword>
<proteinExistence type="evidence at protein level"/>
<feature type="signal peptide" evidence="1">
    <location>
        <begin position="1"/>
        <end position="16"/>
    </location>
</feature>
<feature type="chain" id="PRO_0000417945" description="Valine-rich protein" evidence="1">
    <location>
        <begin position="17"/>
        <end position="238"/>
    </location>
</feature>
<reference evidence="3 4" key="1">
    <citation type="journal article" date="2010" name="BMC Genomics">
        <title>Transcriptome and proteome analysis of Pinctada margaritifera calcifying mantle and shell: focus on biomineralization.</title>
        <authorList>
            <person name="Joubert C."/>
            <person name="Piquemal D."/>
            <person name="Marie B."/>
            <person name="Manchon L."/>
            <person name="Pierrat F."/>
            <person name="Zanella-Cleon I."/>
            <person name="Cochennec-Laureau N."/>
            <person name="Gueguen Y."/>
            <person name="Montagnani C."/>
        </authorList>
    </citation>
    <scope>NUCLEOTIDE SEQUENCE [MRNA]</scope>
    <scope>IDENTIFICATION</scope>
    <source>
        <tissue evidence="4">Mantle</tissue>
    </source>
</reference>
<reference key="2">
    <citation type="journal article" date="2012" name="Proc. Natl. Acad. Sci. U.S.A.">
        <title>Different secretory repertoires control the biomineralization processes of prism and nacre deposition of the pearl oyster shell.</title>
        <authorList>
            <person name="Marie B."/>
            <person name="Joubert C."/>
            <person name="Tayale A."/>
            <person name="Zanella-Cleon I."/>
            <person name="Belliard C."/>
            <person name="Piquemal D."/>
            <person name="Cochennec-Laureau N."/>
            <person name="Marin F."/>
            <person name="Gueguen Y."/>
            <person name="Montagnani C."/>
        </authorList>
    </citation>
    <scope>PROTEIN SEQUENCE OF 35-52; 63-79; 93-120; 147-156; 162-170 AND 173-210</scope>
    <scope>SUBCELLULAR LOCATION</scope>
    <scope>TISSUE SPECIFICITY</scope>
    <source>
        <tissue>Shell</tissue>
    </source>
</reference>
<accession>H2A0K6</accession>
<organism>
    <name type="scientific">Margaritifera margaritifera</name>
    <name type="common">Freshwater pearl mussel</name>
    <dbReference type="NCBI Taxonomy" id="102329"/>
    <lineage>
        <taxon>Eukaryota</taxon>
        <taxon>Metazoa</taxon>
        <taxon>Spiralia</taxon>
        <taxon>Lophotrochozoa</taxon>
        <taxon>Mollusca</taxon>
        <taxon>Bivalvia</taxon>
        <taxon>Autobranchia</taxon>
        <taxon>Pteriomorphia</taxon>
        <taxon>Pterioida</taxon>
        <taxon>Pterioidea</taxon>
        <taxon>Pteriidae</taxon>
        <taxon>Pinctada</taxon>
    </lineage>
</organism>
<name>VRP_PINMG</name>
<protein>
    <recommendedName>
        <fullName>Valine-rich protein</fullName>
    </recommendedName>
    <alternativeName>
        <fullName>Alveoline-like protein</fullName>
    </alternativeName>
</protein>
<dbReference type="EMBL" id="HE610373">
    <property type="protein sequence ID" value="CCE46147.1"/>
    <property type="molecule type" value="mRNA"/>
</dbReference>
<dbReference type="GO" id="GO:0005576">
    <property type="term" value="C:extracellular region"/>
    <property type="evidence" value="ECO:0007669"/>
    <property type="project" value="UniProtKB-SubCell"/>
</dbReference>
<evidence type="ECO:0000255" key="1"/>
<evidence type="ECO:0000269" key="2">
    <source>
    </source>
</evidence>
<evidence type="ECO:0000305" key="3"/>
<evidence type="ECO:0000312" key="4">
    <source>
        <dbReference type="EMBL" id="CCE46147.1"/>
    </source>
</evidence>